<name>MPAB2_PENBR</name>
<dbReference type="EC" id="1.-.-.-" evidence="2"/>
<dbReference type="EMBL" id="KM595305">
    <property type="protein sequence ID" value="AJG44380.1"/>
    <property type="molecule type" value="Genomic_DNA"/>
</dbReference>
<dbReference type="SMR" id="A0A0B5LB52"/>
<dbReference type="UniPathway" id="UPA00213"/>
<dbReference type="GO" id="GO:0005783">
    <property type="term" value="C:endoplasmic reticulum"/>
    <property type="evidence" value="ECO:0000314"/>
    <property type="project" value="UniProt"/>
</dbReference>
<dbReference type="GO" id="GO:0005789">
    <property type="term" value="C:endoplasmic reticulum membrane"/>
    <property type="evidence" value="ECO:0000314"/>
    <property type="project" value="GO_Central"/>
</dbReference>
<dbReference type="GO" id="GO:0016491">
    <property type="term" value="F:oxidoreductase activity"/>
    <property type="evidence" value="ECO:0000314"/>
    <property type="project" value="GO_Central"/>
</dbReference>
<dbReference type="GO" id="GO:0016218">
    <property type="term" value="F:polyketide synthase activity"/>
    <property type="evidence" value="ECO:0000314"/>
    <property type="project" value="UniProt"/>
</dbReference>
<dbReference type="GO" id="GO:0140722">
    <property type="term" value="P:mycophenolic acid biosynthetic process"/>
    <property type="evidence" value="ECO:0000314"/>
    <property type="project" value="GO_Central"/>
</dbReference>
<dbReference type="GO" id="GO:0016114">
    <property type="term" value="P:terpenoid biosynthetic process"/>
    <property type="evidence" value="ECO:0007669"/>
    <property type="project" value="UniProtKB-UniPathway"/>
</dbReference>
<dbReference type="InterPro" id="IPR046366">
    <property type="entry name" value="MPAB"/>
</dbReference>
<dbReference type="PANTHER" id="PTHR36124">
    <property type="match status" value="1"/>
</dbReference>
<dbReference type="PANTHER" id="PTHR36124:SF6">
    <property type="entry name" value="ER-BOUND OXYGENASE MPAB_MPAB'_RUBBER OXYGENASE CATALYTIC DOMAIN-CONTAINING PROTEIN"/>
    <property type="match status" value="1"/>
</dbReference>
<organism>
    <name type="scientific">Penicillium brevicompactum</name>
    <dbReference type="NCBI Taxonomy" id="5074"/>
    <lineage>
        <taxon>Eukaryota</taxon>
        <taxon>Fungi</taxon>
        <taxon>Dikarya</taxon>
        <taxon>Ascomycota</taxon>
        <taxon>Pezizomycotina</taxon>
        <taxon>Eurotiomycetes</taxon>
        <taxon>Eurotiomycetidae</taxon>
        <taxon>Eurotiales</taxon>
        <taxon>Aspergillaceae</taxon>
        <taxon>Penicillium</taxon>
    </lineage>
</organism>
<reference key="1">
    <citation type="journal article" date="2015" name="ChemBioChem">
        <title>Functional characterization of MpaG', the O-methyltransferase involved in the biosynthesis of mycophenolic acid.</title>
        <authorList>
            <person name="Zhang W."/>
            <person name="Cao S."/>
            <person name="Qiu L."/>
            <person name="Qi F."/>
            <person name="Li Z."/>
            <person name="Yang Y."/>
            <person name="Huang S."/>
            <person name="Bai F."/>
            <person name="Liu C."/>
            <person name="Wan X."/>
            <person name="Li S."/>
        </authorList>
    </citation>
    <scope>NUCLEOTIDE SEQUENCE [GENOMIC DNA]</scope>
    <source>
        <strain>NRRL864</strain>
    </source>
</reference>
<reference key="2">
    <citation type="journal article" date="2019" name="Proc. Natl. Acad. Sci. U.S.A.">
        <title>Compartmentalized biosynthesis of mycophenolic acid.</title>
        <authorList>
            <person name="Zhang W."/>
            <person name="Du L."/>
            <person name="Qu Z."/>
            <person name="Zhang X."/>
            <person name="Li F."/>
            <person name="Li Z."/>
            <person name="Qi F."/>
            <person name="Wang X."/>
            <person name="Jiang Y."/>
            <person name="Men P."/>
            <person name="Sun J."/>
            <person name="Cao S."/>
            <person name="Geng C."/>
            <person name="Qi F."/>
            <person name="Wan X."/>
            <person name="Liu C."/>
            <person name="Li S."/>
        </authorList>
    </citation>
    <scope>FUNCTION</scope>
    <scope>SUBCELLULAR LOCATION</scope>
    <scope>DISRUPTION PHENOTYPE</scope>
    <scope>CATALYTIC ACTIVITY</scope>
    <scope>PATHWAY</scope>
</reference>
<comment type="function">
    <text evidence="2 5">ER-bound oxygenase; part of the gene cluster that mediates the biosynthesis of mycophenolic acid (MPA), the first isolated antibiotic natural product in the world obtained from a culture of Penicillium brevicompactum in 1893 (PubMed:31209052). MpaB' catalyzes the oxidative cleavage the C19-C20 double bond in farnesyl-DHMP (FDHMP) to yield FDHMP-3C via a mycophenolic aldehyde intermediate (PubMed:31209052). The first step of the pathway is the synthesis of 5-methylorsellinic acid (5MOA) by the cytosolic polyketide synthase mpaC. 5MOA is then converted to the phthalide compound 5,7-dihydroxy-4,6-dimethylphthalide (DHMP) by the endoplasmic reticulum-bound cytochrome P450 monooxygenase mpaDE. MpaDE first catalyzes hydroxylation of 5-MOA to 4,6-dihydroxy-2-(hydroxymethyl)-3-methylbenzoic acid (DHMB). MpaDE then acts as a lactone synthase that catalyzes the ring closure to convert DHMB into DHMP. The next step is the prenylation of DHMP by the Golgi apparatus-associated prenyltransferase mpaA to yield farnesyl-DHMP (FDHMP). The ER-bound oxygenase mpaB then mediates the oxidative cleavage the C19-C20 double bond in FDHMP to yield FDHMP-3C via a mycophenolic aldehyde intermediate. The O-methyltransferase mpaG catalyzes the methylation of FDHMP-3C to yield MFDHMP-3C. After the cytosolic methylation of FDHMP-3C, MFDHMP-3C enters into peroxisomes probably via free diffusion due to its low molecular weight. Upon a peroxisomal CoA ligation reaction, catalyzed by a beta-oxidation component enzyme acyl-CoA ligase ACL891, MFDHMP-3C-CoA would then be restricted to peroxisomes for the following beta-oxidation pathway steps. The peroxisomal beta-oxidation machinery than converts MFDHMP-3C-CoA into MPA_CoA, via a beta-oxidation chain-shortening process. Finally mpaH acts as a peroxisomal acyl-CoA hydrolase with high substrate specificity toward MPA-CoA to release the final product MPA (Probable) (PubMed:31209052).</text>
</comment>
<comment type="catalytic activity">
    <reaction evidence="2">
        <text>4-farnesyl-3,5-dihydroxy-6-methylphthalide + AH2 + 2 O2 = (4E,8E)-10-(4,6-dihydroxy-7-methyl-3-oxo-1,3-dihydro-2-benzofuran-5-yl)-4,8-dimethyldeca-4,8-dienoate + acetone + A + H2O + H(+)</text>
        <dbReference type="Rhea" id="RHEA:66688"/>
        <dbReference type="ChEBI" id="CHEBI:13193"/>
        <dbReference type="ChEBI" id="CHEBI:15347"/>
        <dbReference type="ChEBI" id="CHEBI:15377"/>
        <dbReference type="ChEBI" id="CHEBI:15378"/>
        <dbReference type="ChEBI" id="CHEBI:15379"/>
        <dbReference type="ChEBI" id="CHEBI:17499"/>
        <dbReference type="ChEBI" id="CHEBI:167386"/>
        <dbReference type="ChEBI" id="CHEBI:167389"/>
    </reaction>
    <physiologicalReaction direction="left-to-right" evidence="2">
        <dbReference type="Rhea" id="RHEA:66689"/>
    </physiologicalReaction>
</comment>
<comment type="pathway">
    <text evidence="2">Secondary metabolite biosynthesis; terpenoid biosynthesis.</text>
</comment>
<comment type="subcellular location">
    <subcellularLocation>
        <location evidence="2">Endoplasmic reticulum membrane</location>
        <topology evidence="1">Single-pass membrane protein</topology>
    </subcellularLocation>
</comment>
<comment type="disruption phenotype">
    <text evidence="2">Leads to a dramatically decreased production of MPA and accumulates significant amounts of farnesyl-DHMP (FDHMP) in mycelia.</text>
</comment>
<comment type="similarity">
    <text evidence="4">Belongs to the mpaB oxygenase family.</text>
</comment>
<sequence>MSLSLPPALSELARALPYSRTQWLPILVGFLIGYPLLIKALRYKRLGEMKKKFYFPTRESMAEMTDEEAFLIQKEMAQLEFPFMFLTSGQFALFRTYGIPTISHLLTKTGQFSKPETSFKRYTDTAALIGEMVENSPTSQRAFISVARTRFLHSGYQASGKILDADLLYTLALFAVQPVRFIENFEWRTLSDLELCAIGTFWKSLGDALGISSEILPSGKTGFKDGIQWLEEVDVWSQDYEAKYMVPDPKNRESADQATAVLLYNLPKILHPIGLQFTSYMMDDRLRKAMLYEAPSPGWSAVFSSLLATRKFVLRYLSPPRPAALAVSNIAQKPDKDDRYHRMSWDALPFYIRPTFWNRWGPMAWISWLMAHPVPGDHGQKYYPQGYHIQDIGPKYFEGKGHKEIQEMMKELKISRTGKCPFH</sequence>
<proteinExistence type="evidence at protein level"/>
<gene>
    <name evidence="3" type="primary">mpaB'</name>
</gene>
<feature type="chain" id="PRO_0000451890" description="ER-bound oxygenase mpaB'">
    <location>
        <begin position="1"/>
        <end position="423"/>
    </location>
</feature>
<feature type="topological domain" description="Lumenal" evidence="5">
    <location>
        <begin position="1"/>
        <end position="22"/>
    </location>
</feature>
<feature type="transmembrane region" description="Helical" evidence="1">
    <location>
        <begin position="23"/>
        <end position="41"/>
    </location>
</feature>
<feature type="topological domain" description="Cytoplasmic" evidence="5">
    <location>
        <begin position="42"/>
        <end position="423"/>
    </location>
</feature>
<keyword id="KW-0256">Endoplasmic reticulum</keyword>
<keyword id="KW-0472">Membrane</keyword>
<keyword id="KW-0560">Oxidoreductase</keyword>
<keyword id="KW-0812">Transmembrane</keyword>
<keyword id="KW-1133">Transmembrane helix</keyword>
<accession>A0A0B5LB52</accession>
<evidence type="ECO:0000255" key="1"/>
<evidence type="ECO:0000269" key="2">
    <source>
    </source>
</evidence>
<evidence type="ECO:0000303" key="3">
    <source>
    </source>
</evidence>
<evidence type="ECO:0000305" key="4"/>
<evidence type="ECO:0000305" key="5">
    <source>
    </source>
</evidence>
<protein>
    <recommendedName>
        <fullName evidence="3">ER-bound oxygenase mpaB'</fullName>
        <ecNumber evidence="2">1.-.-.-</ecNumber>
    </recommendedName>
    <alternativeName>
        <fullName evidence="3">Mycophenolic acid biosynthesis cluster protein B'</fullName>
    </alternativeName>
</protein>